<accession>A7ZHH8</accession>
<comment type="function">
    <text evidence="1">Catalyzes the initial step of the lipid cycle reactions in the biosynthesis of the cell wall peptidoglycan: transfers peptidoglycan precursor phospho-MurNAc-pentapeptide from UDP-MurNAc-pentapeptide onto the lipid carrier undecaprenyl phosphate, yielding undecaprenyl-pyrophosphoryl-MurNAc-pentapeptide, known as lipid I.</text>
</comment>
<comment type="catalytic activity">
    <reaction evidence="1">
        <text>UDP-N-acetyl-alpha-D-muramoyl-L-alanyl-gamma-D-glutamyl-meso-2,6-diaminopimeloyl-D-alanyl-D-alanine + di-trans,octa-cis-undecaprenyl phosphate = di-trans,octa-cis-undecaprenyl diphospho-N-acetyl-alpha-D-muramoyl-L-alanyl-D-glutamyl-meso-2,6-diaminopimeloyl-D-alanyl-D-alanine + UMP</text>
        <dbReference type="Rhea" id="RHEA:28386"/>
        <dbReference type="ChEBI" id="CHEBI:57865"/>
        <dbReference type="ChEBI" id="CHEBI:60392"/>
        <dbReference type="ChEBI" id="CHEBI:61386"/>
        <dbReference type="ChEBI" id="CHEBI:61387"/>
        <dbReference type="EC" id="2.7.8.13"/>
    </reaction>
</comment>
<comment type="cofactor">
    <cofactor evidence="1">
        <name>Mg(2+)</name>
        <dbReference type="ChEBI" id="CHEBI:18420"/>
    </cofactor>
</comment>
<comment type="pathway">
    <text evidence="1">Cell wall biogenesis; peptidoglycan biosynthesis.</text>
</comment>
<comment type="subcellular location">
    <subcellularLocation>
        <location evidence="1">Cell inner membrane</location>
        <topology evidence="1">Multi-pass membrane protein</topology>
    </subcellularLocation>
</comment>
<comment type="similarity">
    <text evidence="1">Belongs to the glycosyltransferase 4 family. MraY subfamily.</text>
</comment>
<proteinExistence type="inferred from homology"/>
<dbReference type="EC" id="2.7.8.13" evidence="1"/>
<dbReference type="EMBL" id="CP000800">
    <property type="protein sequence ID" value="ABV19795.1"/>
    <property type="molecule type" value="Genomic_DNA"/>
</dbReference>
<dbReference type="RefSeq" id="WP_000964131.1">
    <property type="nucleotide sequence ID" value="NC_009801.1"/>
</dbReference>
<dbReference type="SMR" id="A7ZHH8"/>
<dbReference type="GeneID" id="93777347"/>
<dbReference type="KEGG" id="ecw:EcE24377A_0089"/>
<dbReference type="HOGENOM" id="CLU_023982_0_0_6"/>
<dbReference type="UniPathway" id="UPA00219"/>
<dbReference type="Proteomes" id="UP000001122">
    <property type="component" value="Chromosome"/>
</dbReference>
<dbReference type="GO" id="GO:0005886">
    <property type="term" value="C:plasma membrane"/>
    <property type="evidence" value="ECO:0007669"/>
    <property type="project" value="UniProtKB-SubCell"/>
</dbReference>
<dbReference type="GO" id="GO:0046872">
    <property type="term" value="F:metal ion binding"/>
    <property type="evidence" value="ECO:0007669"/>
    <property type="project" value="UniProtKB-KW"/>
</dbReference>
<dbReference type="GO" id="GO:0008963">
    <property type="term" value="F:phospho-N-acetylmuramoyl-pentapeptide-transferase activity"/>
    <property type="evidence" value="ECO:0007669"/>
    <property type="project" value="UniProtKB-UniRule"/>
</dbReference>
<dbReference type="GO" id="GO:0051992">
    <property type="term" value="F:UDP-N-acetylmuramoyl-L-alanyl-D-glutamyl-meso-2,6-diaminopimelyl-D-alanyl-D-alanine:undecaprenyl-phosphate transferase activity"/>
    <property type="evidence" value="ECO:0007669"/>
    <property type="project" value="RHEA"/>
</dbReference>
<dbReference type="GO" id="GO:0051301">
    <property type="term" value="P:cell division"/>
    <property type="evidence" value="ECO:0007669"/>
    <property type="project" value="UniProtKB-KW"/>
</dbReference>
<dbReference type="GO" id="GO:0071555">
    <property type="term" value="P:cell wall organization"/>
    <property type="evidence" value="ECO:0007669"/>
    <property type="project" value="UniProtKB-KW"/>
</dbReference>
<dbReference type="GO" id="GO:0009252">
    <property type="term" value="P:peptidoglycan biosynthetic process"/>
    <property type="evidence" value="ECO:0007669"/>
    <property type="project" value="UniProtKB-UniRule"/>
</dbReference>
<dbReference type="GO" id="GO:0008360">
    <property type="term" value="P:regulation of cell shape"/>
    <property type="evidence" value="ECO:0007669"/>
    <property type="project" value="UniProtKB-KW"/>
</dbReference>
<dbReference type="CDD" id="cd06852">
    <property type="entry name" value="GT_MraY"/>
    <property type="match status" value="1"/>
</dbReference>
<dbReference type="HAMAP" id="MF_00038">
    <property type="entry name" value="MraY"/>
    <property type="match status" value="1"/>
</dbReference>
<dbReference type="InterPro" id="IPR000715">
    <property type="entry name" value="Glycosyl_transferase_4"/>
</dbReference>
<dbReference type="InterPro" id="IPR003524">
    <property type="entry name" value="PNAcMuramoyl-5peptid_Trfase"/>
</dbReference>
<dbReference type="InterPro" id="IPR018480">
    <property type="entry name" value="PNAcMuramoyl-5peptid_Trfase_CS"/>
</dbReference>
<dbReference type="NCBIfam" id="TIGR00445">
    <property type="entry name" value="mraY"/>
    <property type="match status" value="1"/>
</dbReference>
<dbReference type="PANTHER" id="PTHR22926">
    <property type="entry name" value="PHOSPHO-N-ACETYLMURAMOYL-PENTAPEPTIDE-TRANSFERASE"/>
    <property type="match status" value="1"/>
</dbReference>
<dbReference type="PANTHER" id="PTHR22926:SF5">
    <property type="entry name" value="PHOSPHO-N-ACETYLMURAMOYL-PENTAPEPTIDE-TRANSFERASE HOMOLOG"/>
    <property type="match status" value="1"/>
</dbReference>
<dbReference type="Pfam" id="PF00953">
    <property type="entry name" value="Glycos_transf_4"/>
    <property type="match status" value="1"/>
</dbReference>
<dbReference type="Pfam" id="PF10555">
    <property type="entry name" value="MraY_sig1"/>
    <property type="match status" value="1"/>
</dbReference>
<dbReference type="PROSITE" id="PS01347">
    <property type="entry name" value="MRAY_1"/>
    <property type="match status" value="1"/>
</dbReference>
<dbReference type="PROSITE" id="PS01348">
    <property type="entry name" value="MRAY_2"/>
    <property type="match status" value="1"/>
</dbReference>
<protein>
    <recommendedName>
        <fullName evidence="1">Phospho-N-acetylmuramoyl-pentapeptide-transferase</fullName>
        <ecNumber evidence="1">2.7.8.13</ecNumber>
    </recommendedName>
    <alternativeName>
        <fullName evidence="1">UDP-MurNAc-pentapeptide phosphotransferase</fullName>
    </alternativeName>
</protein>
<name>MRAY_ECO24</name>
<evidence type="ECO:0000255" key="1">
    <source>
        <dbReference type="HAMAP-Rule" id="MF_00038"/>
    </source>
</evidence>
<gene>
    <name evidence="1" type="primary">mraY</name>
    <name type="ordered locus">EcE24377A_0089</name>
</gene>
<organism>
    <name type="scientific">Escherichia coli O139:H28 (strain E24377A / ETEC)</name>
    <dbReference type="NCBI Taxonomy" id="331111"/>
    <lineage>
        <taxon>Bacteria</taxon>
        <taxon>Pseudomonadati</taxon>
        <taxon>Pseudomonadota</taxon>
        <taxon>Gammaproteobacteria</taxon>
        <taxon>Enterobacterales</taxon>
        <taxon>Enterobacteriaceae</taxon>
        <taxon>Escherichia</taxon>
    </lineage>
</organism>
<feature type="chain" id="PRO_1000057275" description="Phospho-N-acetylmuramoyl-pentapeptide-transferase">
    <location>
        <begin position="1"/>
        <end position="360"/>
    </location>
</feature>
<feature type="topological domain" description="Periplasmic" evidence="1">
    <location>
        <begin position="1"/>
        <end position="25"/>
    </location>
</feature>
<feature type="transmembrane region" description="Helical" evidence="1">
    <location>
        <begin position="26"/>
        <end position="46"/>
    </location>
</feature>
<feature type="topological domain" description="Cytoplasmic" evidence="1">
    <location>
        <begin position="47"/>
        <end position="71"/>
    </location>
</feature>
<feature type="transmembrane region" description="Helical" evidence="1">
    <location>
        <begin position="72"/>
        <end position="92"/>
    </location>
</feature>
<feature type="topological domain" description="Periplasmic" evidence="1">
    <location>
        <position position="93"/>
    </location>
</feature>
<feature type="transmembrane region" description="Helical" evidence="1">
    <location>
        <begin position="94"/>
        <end position="114"/>
    </location>
</feature>
<feature type="topological domain" description="Cytoplasmic" evidence="1">
    <location>
        <begin position="115"/>
        <end position="131"/>
    </location>
</feature>
<feature type="transmembrane region" description="Helical" evidence="1">
    <location>
        <begin position="132"/>
        <end position="152"/>
    </location>
</feature>
<feature type="topological domain" description="Periplasmic" evidence="1">
    <location>
        <begin position="153"/>
        <end position="167"/>
    </location>
</feature>
<feature type="transmembrane region" description="Helical" evidence="1">
    <location>
        <begin position="168"/>
        <end position="188"/>
    </location>
</feature>
<feature type="topological domain" description="Cytoplasmic" evidence="1">
    <location>
        <begin position="189"/>
        <end position="198"/>
    </location>
</feature>
<feature type="transmembrane region" description="Helical" evidence="1">
    <location>
        <begin position="199"/>
        <end position="219"/>
    </location>
</feature>
<feature type="topological domain" description="Periplasmic" evidence="1">
    <location>
        <begin position="220"/>
        <end position="235"/>
    </location>
</feature>
<feature type="transmembrane region" description="Helical" evidence="1">
    <location>
        <begin position="236"/>
        <end position="256"/>
    </location>
</feature>
<feature type="topological domain" description="Cytoplasmic" evidence="1">
    <location>
        <begin position="257"/>
        <end position="262"/>
    </location>
</feature>
<feature type="transmembrane region" description="Helical" evidence="1">
    <location>
        <begin position="263"/>
        <end position="283"/>
    </location>
</feature>
<feature type="topological domain" description="Periplasmic" evidence="1">
    <location>
        <begin position="284"/>
        <end position="287"/>
    </location>
</feature>
<feature type="transmembrane region" description="Helical" evidence="1">
    <location>
        <begin position="288"/>
        <end position="308"/>
    </location>
</feature>
<feature type="topological domain" description="Cytoplasmic" evidence="1">
    <location>
        <begin position="309"/>
        <end position="337"/>
    </location>
</feature>
<feature type="transmembrane region" description="Helical" evidence="1">
    <location>
        <begin position="338"/>
        <end position="358"/>
    </location>
</feature>
<feature type="topological domain" description="Periplasmic" evidence="1">
    <location>
        <begin position="359"/>
        <end position="360"/>
    </location>
</feature>
<reference key="1">
    <citation type="journal article" date="2008" name="J. Bacteriol.">
        <title>The pangenome structure of Escherichia coli: comparative genomic analysis of E. coli commensal and pathogenic isolates.</title>
        <authorList>
            <person name="Rasko D.A."/>
            <person name="Rosovitz M.J."/>
            <person name="Myers G.S.A."/>
            <person name="Mongodin E.F."/>
            <person name="Fricke W.F."/>
            <person name="Gajer P."/>
            <person name="Crabtree J."/>
            <person name="Sebaihia M."/>
            <person name="Thomson N.R."/>
            <person name="Chaudhuri R."/>
            <person name="Henderson I.R."/>
            <person name="Sperandio V."/>
            <person name="Ravel J."/>
        </authorList>
    </citation>
    <scope>NUCLEOTIDE SEQUENCE [LARGE SCALE GENOMIC DNA]</scope>
    <source>
        <strain>E24377A / ETEC</strain>
    </source>
</reference>
<keyword id="KW-0131">Cell cycle</keyword>
<keyword id="KW-0132">Cell division</keyword>
<keyword id="KW-0997">Cell inner membrane</keyword>
<keyword id="KW-1003">Cell membrane</keyword>
<keyword id="KW-0133">Cell shape</keyword>
<keyword id="KW-0961">Cell wall biogenesis/degradation</keyword>
<keyword id="KW-0460">Magnesium</keyword>
<keyword id="KW-0472">Membrane</keyword>
<keyword id="KW-0479">Metal-binding</keyword>
<keyword id="KW-0573">Peptidoglycan synthesis</keyword>
<keyword id="KW-1185">Reference proteome</keyword>
<keyword id="KW-0808">Transferase</keyword>
<keyword id="KW-0812">Transmembrane</keyword>
<keyword id="KW-1133">Transmembrane helix</keyword>
<sequence length="360" mass="39875">MLVWLAEHLVKYYSGFNVFSYLTFRAIVSLLTALFISLWMGPRMIAHLQKLSFGQVVRNDGPESHFSKRGTPTMGGIMILTAIVISVLLWAYPSNPYVWCVLVVLVGYGVIGFVDDYRKVVRKDTKGLIARWKYFWMSVIALGVAFALYLAGKDTPATQLVVPFFKDVMPQLGLFYILLAYFVIVGTGNAVNLTDGLDGLAIMPTVFVAGGFALVAWATGNMNFASYLHIPYLRHAGELVIVCTAIVGAGLGFLWFNTYPAQVFMGDVGSLALGGALGIIAVLLRQEFLLVIMGGVFVVETLSVILQVGSFKLRGQRIFRMAPIHHHYELKGWPEPRVIVRFWIISLMLVLIGLATLKVR</sequence>